<comment type="function">
    <text evidence="1 2">Guanine nucleotide-binding proteins (G proteins) function as transducers downstream of G protein-coupled receptors (GPCRs) in numerous signaling cascades. The alpha chain contains the guanine nucleotide binding site and alternates between an active, GTP-bound state and an inactive, GDP-bound state. Signaling by an activated GPCR promotes GDP release and GTP binding. The alpha subunit has a low GTPase activity that converts bound GTP to GDP, thereby terminating the signal. Both GDP release and GTP hydrolysis are modulated by numerous regulatory proteins (By similarity). Signaling is mediated via effector proteins, such as adenylate cyclase. Inhibits adenylate cyclase activity, leading to decreased intracellular cAMP levels (By similarity). Required for cortical dynein-dynactin complex recruitment during metaphase (By similarity).</text>
</comment>
<comment type="catalytic activity">
    <reaction evidence="2">
        <text>GTP + H2O = GDP + phosphate + H(+)</text>
        <dbReference type="Rhea" id="RHEA:19669"/>
        <dbReference type="ChEBI" id="CHEBI:15377"/>
        <dbReference type="ChEBI" id="CHEBI:15378"/>
        <dbReference type="ChEBI" id="CHEBI:37565"/>
        <dbReference type="ChEBI" id="CHEBI:43474"/>
        <dbReference type="ChEBI" id="CHEBI:58189"/>
    </reaction>
    <physiologicalReaction direction="left-to-right" evidence="2">
        <dbReference type="Rhea" id="RHEA:19670"/>
    </physiologicalReaction>
</comment>
<comment type="subunit">
    <text evidence="1 2">Heterotrimeric G proteins are composed of 3 units; alpha, beta and gamma. The alpha chain contains the guanine nucleotide binding site. Part of a spindle orientation complex. Identified in complex with the beta subunit GNB1 and the gamma subunit GNG1. Identified in complex with the beta subunit GNB1 and the gamma subunit GNG2. GTP binding causes dissociation of the heterotrimer, liberating the individual subunits so that they can interact with downstream effector proteins (By similarity).</text>
</comment>
<comment type="subcellular location">
    <subcellularLocation>
        <location evidence="1">Nucleus</location>
    </subcellularLocation>
    <subcellularLocation>
        <location evidence="1">Cytoplasm</location>
    </subcellularLocation>
    <subcellularLocation>
        <location evidence="1">Cell membrane</location>
        <topology evidence="1">Peripheral membrane protein</topology>
        <orientation evidence="1">Cytoplasmic side</orientation>
    </subcellularLocation>
    <subcellularLocation>
        <location evidence="1">Cytoplasm</location>
        <location evidence="1">Cytoskeleton</location>
        <location evidence="1">Microtubule organizing center</location>
        <location evidence="1">Centrosome</location>
    </subcellularLocation>
    <subcellularLocation>
        <location evidence="2">Cytoplasm</location>
        <location evidence="2">Cell cortex</location>
    </subcellularLocation>
    <subcellularLocation>
        <location evidence="1">Membrane</location>
        <topology evidence="1">Lipid-anchor</topology>
    </subcellularLocation>
</comment>
<comment type="PTM">
    <text evidence="1">Myristoylation at Gly-2 is required for membrane anchoring before palmitoylation.</text>
</comment>
<comment type="PTM">
    <text evidence="1">Palmitoylation at Cys-3 varies with membrane lipid composition.</text>
</comment>
<comment type="similarity">
    <text evidence="4">Belongs to the G-alpha family. G(i/o/t/z) subfamily.</text>
</comment>
<sequence length="354" mass="40281">MGCTLSTDDKAAQERSKMIDRNLRDDGEKAAREVKLLLLGAGESGKSTIVKQMKIIHEAGYSEEECKQYKAVVYSNTIQSIIAIIRAMGRLKIDFADQARADDARQLFILAGSTEEGFMTGELAGVIQRLWKDGGVQACFSRSREYQLNDSAAYYLNDLDRISHASYVPTQQDVLRTRVKTTGIVETHFTFKDLHFKMFDVGGQRSERKKWIHCFEGVTAIIFCVALSDYDLVLAEDEEMNGMHESMKLFDSICNNKWFTDTSIILFLNKKDLFEEKIKKSLLTICFPEYAGSNTYEEAAAYVQCQFEDLNKRKDTKEIYTHFTCATDTKNVQFVFDAVTDVIIKNNLKDCGLF</sequence>
<organism>
    <name type="scientific">Oryzias latipes</name>
    <name type="common">Japanese rice fish</name>
    <name type="synonym">Japanese killifish</name>
    <dbReference type="NCBI Taxonomy" id="8090"/>
    <lineage>
        <taxon>Eukaryota</taxon>
        <taxon>Metazoa</taxon>
        <taxon>Chordata</taxon>
        <taxon>Craniata</taxon>
        <taxon>Vertebrata</taxon>
        <taxon>Euteleostomi</taxon>
        <taxon>Actinopterygii</taxon>
        <taxon>Neopterygii</taxon>
        <taxon>Teleostei</taxon>
        <taxon>Neoteleostei</taxon>
        <taxon>Acanthomorphata</taxon>
        <taxon>Ovalentaria</taxon>
        <taxon>Atherinomorphae</taxon>
        <taxon>Beloniformes</taxon>
        <taxon>Adrianichthyidae</taxon>
        <taxon>Oryziinae</taxon>
        <taxon>Oryzias</taxon>
    </lineage>
</organism>
<accession>P87383</accession>
<feature type="initiator methionine" description="Removed" evidence="2">
    <location>
        <position position="1"/>
    </location>
</feature>
<feature type="chain" id="PRO_0000203675" description="Guanine nucleotide-binding protein G(i) subunit alpha-1">
    <location>
        <begin position="2"/>
        <end position="354"/>
    </location>
</feature>
<feature type="domain" description="G-alpha" evidence="3">
    <location>
        <begin position="32"/>
        <end position="354"/>
    </location>
</feature>
<feature type="region of interest" description="G1 motif" evidence="3">
    <location>
        <begin position="35"/>
        <end position="48"/>
    </location>
</feature>
<feature type="region of interest" description="G2 motif" evidence="3">
    <location>
        <begin position="173"/>
        <end position="181"/>
    </location>
</feature>
<feature type="region of interest" description="G3 motif" evidence="3">
    <location>
        <begin position="196"/>
        <end position="205"/>
    </location>
</feature>
<feature type="region of interest" description="G4 motif" evidence="3">
    <location>
        <begin position="265"/>
        <end position="272"/>
    </location>
</feature>
<feature type="region of interest" description="G5 motif" evidence="3">
    <location>
        <begin position="324"/>
        <end position="329"/>
    </location>
</feature>
<feature type="binding site" evidence="1">
    <location>
        <begin position="43"/>
        <end position="48"/>
    </location>
    <ligand>
        <name>GTP</name>
        <dbReference type="ChEBI" id="CHEBI:37565"/>
    </ligand>
</feature>
<feature type="binding site" evidence="1">
    <location>
        <position position="47"/>
    </location>
    <ligand>
        <name>Mg(2+)</name>
        <dbReference type="ChEBI" id="CHEBI:18420"/>
    </ligand>
</feature>
<feature type="binding site" evidence="1">
    <location>
        <begin position="150"/>
        <end position="151"/>
    </location>
    <ligand>
        <name>GTP</name>
        <dbReference type="ChEBI" id="CHEBI:37565"/>
    </ligand>
</feature>
<feature type="binding site" evidence="1">
    <location>
        <begin position="175"/>
        <end position="178"/>
    </location>
    <ligand>
        <name>GTP</name>
        <dbReference type="ChEBI" id="CHEBI:37565"/>
    </ligand>
</feature>
<feature type="binding site" evidence="1">
    <location>
        <position position="181"/>
    </location>
    <ligand>
        <name>Mg(2+)</name>
        <dbReference type="ChEBI" id="CHEBI:18420"/>
    </ligand>
</feature>
<feature type="binding site" evidence="1">
    <location>
        <begin position="200"/>
        <end position="204"/>
    </location>
    <ligand>
        <name>GTP</name>
        <dbReference type="ChEBI" id="CHEBI:37565"/>
    </ligand>
</feature>
<feature type="binding site" evidence="1">
    <location>
        <begin position="269"/>
        <end position="272"/>
    </location>
    <ligand>
        <name>GTP</name>
        <dbReference type="ChEBI" id="CHEBI:37565"/>
    </ligand>
</feature>
<feature type="binding site" evidence="1">
    <location>
        <position position="326"/>
    </location>
    <ligand>
        <name>GTP</name>
        <dbReference type="ChEBI" id="CHEBI:37565"/>
    </ligand>
</feature>
<feature type="lipid moiety-binding region" description="N-myristoyl glycine" evidence="2">
    <location>
        <position position="2"/>
    </location>
</feature>
<feature type="lipid moiety-binding region" description="S-palmitoyl cysteine" evidence="1">
    <location>
        <position position="3"/>
    </location>
</feature>
<protein>
    <recommendedName>
        <fullName>Guanine nucleotide-binding protein G(i) subunit alpha-1</fullName>
        <ecNumber evidence="2">3.6.5.-</ecNumber>
    </recommendedName>
    <alternativeName>
        <fullName>Adenylate cyclase-inhibiting G alpha protein</fullName>
    </alternativeName>
    <alternativeName>
        <fullName>Gi alpha a</fullName>
    </alternativeName>
    <alternativeName>
        <fullName>Gi1 subunit alpha</fullName>
    </alternativeName>
</protein>
<name>GNAI1_ORYLA</name>
<gene>
    <name type="primary">gnai1</name>
</gene>
<proteinExistence type="evidence at transcript level"/>
<dbReference type="EC" id="3.6.5.-" evidence="2"/>
<dbReference type="EMBL" id="AB001741">
    <property type="protein sequence ID" value="BAA19454.1"/>
    <property type="molecule type" value="mRNA"/>
</dbReference>
<dbReference type="RefSeq" id="NP_001116402.1">
    <property type="nucleotide sequence ID" value="NM_001122930.2"/>
</dbReference>
<dbReference type="SMR" id="P87383"/>
<dbReference type="FunCoup" id="P87383">
    <property type="interactions" value="1245"/>
</dbReference>
<dbReference type="STRING" id="8090.ENSORLP00000013487"/>
<dbReference type="GeneID" id="100144384"/>
<dbReference type="KEGG" id="ola:100144384"/>
<dbReference type="CTD" id="2770"/>
<dbReference type="eggNOG" id="KOG0082">
    <property type="taxonomic scope" value="Eukaryota"/>
</dbReference>
<dbReference type="InParanoid" id="P87383"/>
<dbReference type="OrthoDB" id="5817230at2759"/>
<dbReference type="Proteomes" id="UP000001038">
    <property type="component" value="Unplaced"/>
</dbReference>
<dbReference type="Proteomes" id="UP000265180">
    <property type="component" value="Chromosome 9"/>
</dbReference>
<dbReference type="Proteomes" id="UP000265200">
    <property type="component" value="Chromosome 9"/>
</dbReference>
<dbReference type="GO" id="GO:0005938">
    <property type="term" value="C:cell cortex"/>
    <property type="evidence" value="ECO:0000250"/>
    <property type="project" value="UniProtKB"/>
</dbReference>
<dbReference type="GO" id="GO:0005813">
    <property type="term" value="C:centrosome"/>
    <property type="evidence" value="ECO:0000250"/>
    <property type="project" value="UniProtKB"/>
</dbReference>
<dbReference type="GO" id="GO:0005737">
    <property type="term" value="C:cytoplasm"/>
    <property type="evidence" value="ECO:0000250"/>
    <property type="project" value="UniProtKB"/>
</dbReference>
<dbReference type="GO" id="GO:0005834">
    <property type="term" value="C:heterotrimeric G-protein complex"/>
    <property type="evidence" value="ECO:0000318"/>
    <property type="project" value="GO_Central"/>
</dbReference>
<dbReference type="GO" id="GO:0030496">
    <property type="term" value="C:midbody"/>
    <property type="evidence" value="ECO:0000250"/>
    <property type="project" value="UniProtKB"/>
</dbReference>
<dbReference type="GO" id="GO:0005634">
    <property type="term" value="C:nucleus"/>
    <property type="evidence" value="ECO:0007669"/>
    <property type="project" value="UniProtKB-SubCell"/>
</dbReference>
<dbReference type="GO" id="GO:0005886">
    <property type="term" value="C:plasma membrane"/>
    <property type="evidence" value="ECO:0000250"/>
    <property type="project" value="UniProtKB"/>
</dbReference>
<dbReference type="GO" id="GO:0001664">
    <property type="term" value="F:G protein-coupled receptor binding"/>
    <property type="evidence" value="ECO:0000250"/>
    <property type="project" value="UniProtKB"/>
</dbReference>
<dbReference type="GO" id="GO:0031821">
    <property type="term" value="F:G protein-coupled serotonin receptor binding"/>
    <property type="evidence" value="ECO:0000318"/>
    <property type="project" value="GO_Central"/>
</dbReference>
<dbReference type="GO" id="GO:0031683">
    <property type="term" value="F:G-protein beta/gamma-subunit complex binding"/>
    <property type="evidence" value="ECO:0000318"/>
    <property type="project" value="GO_Central"/>
</dbReference>
<dbReference type="GO" id="GO:0019003">
    <property type="term" value="F:GDP binding"/>
    <property type="evidence" value="ECO:0000250"/>
    <property type="project" value="UniProtKB"/>
</dbReference>
<dbReference type="GO" id="GO:0005525">
    <property type="term" value="F:GTP binding"/>
    <property type="evidence" value="ECO:0000250"/>
    <property type="project" value="UniProtKB"/>
</dbReference>
<dbReference type="GO" id="GO:0003924">
    <property type="term" value="F:GTPase activity"/>
    <property type="evidence" value="ECO:0000250"/>
    <property type="project" value="UniProtKB"/>
</dbReference>
<dbReference type="GO" id="GO:0000287">
    <property type="term" value="F:magnesium ion binding"/>
    <property type="evidence" value="ECO:0000250"/>
    <property type="project" value="UniProtKB"/>
</dbReference>
<dbReference type="GO" id="GO:0007188">
    <property type="term" value="P:adenylate cyclase-modulating G protein-coupled receptor signaling pathway"/>
    <property type="evidence" value="ECO:0000250"/>
    <property type="project" value="UniProtKB"/>
</dbReference>
<dbReference type="GO" id="GO:0051301">
    <property type="term" value="P:cell division"/>
    <property type="evidence" value="ECO:0000250"/>
    <property type="project" value="UniProtKB"/>
</dbReference>
<dbReference type="GO" id="GO:1904322">
    <property type="term" value="P:cellular response to forskolin"/>
    <property type="evidence" value="ECO:0000250"/>
    <property type="project" value="UniProtKB"/>
</dbReference>
<dbReference type="GO" id="GO:0007186">
    <property type="term" value="P:G protein-coupled receptor signaling pathway"/>
    <property type="evidence" value="ECO:0000250"/>
    <property type="project" value="UniProtKB"/>
</dbReference>
<dbReference type="GO" id="GO:1904778">
    <property type="term" value="P:positive regulation of protein localization to cell cortex"/>
    <property type="evidence" value="ECO:0000250"/>
    <property type="project" value="UniProtKB"/>
</dbReference>
<dbReference type="GO" id="GO:0060236">
    <property type="term" value="P:regulation of mitotic spindle organization"/>
    <property type="evidence" value="ECO:0000250"/>
    <property type="project" value="UniProtKB"/>
</dbReference>
<dbReference type="CDD" id="cd00066">
    <property type="entry name" value="G-alpha"/>
    <property type="match status" value="1"/>
</dbReference>
<dbReference type="FunFam" id="1.10.400.10:FF:000001">
    <property type="entry name" value="Guanine nucleotide-binding protein G(I) subunit alpha"/>
    <property type="match status" value="1"/>
</dbReference>
<dbReference type="FunFam" id="3.40.50.300:FF:002487">
    <property type="entry name" value="Guanine nucleotide-binding protein G(i) subunit alpha-1"/>
    <property type="match status" value="1"/>
</dbReference>
<dbReference type="FunFam" id="3.40.50.300:FF:003559">
    <property type="entry name" value="Guanine nucleotide-binding protein G(i) subunit alpha-1"/>
    <property type="match status" value="1"/>
</dbReference>
<dbReference type="Gene3D" id="1.10.400.10">
    <property type="entry name" value="GI Alpha 1, domain 2-like"/>
    <property type="match status" value="1"/>
</dbReference>
<dbReference type="Gene3D" id="3.40.50.300">
    <property type="entry name" value="P-loop containing nucleotide triphosphate hydrolases"/>
    <property type="match status" value="1"/>
</dbReference>
<dbReference type="InterPro" id="IPR001408">
    <property type="entry name" value="Gprotein_alpha_I"/>
</dbReference>
<dbReference type="InterPro" id="IPR001019">
    <property type="entry name" value="Gprotein_alpha_su"/>
</dbReference>
<dbReference type="InterPro" id="IPR011025">
    <property type="entry name" value="GproteinA_insert"/>
</dbReference>
<dbReference type="InterPro" id="IPR027417">
    <property type="entry name" value="P-loop_NTPase"/>
</dbReference>
<dbReference type="PANTHER" id="PTHR10218">
    <property type="entry name" value="GTP-BINDING PROTEIN ALPHA SUBUNIT"/>
    <property type="match status" value="1"/>
</dbReference>
<dbReference type="PANTHER" id="PTHR10218:SF347">
    <property type="entry name" value="GUANINE NUCLEOTIDE-BINDING PROTEIN (G PROTEIN), ALPHA-INHIBITING ACTIVITY POLYPEPTIDE A"/>
    <property type="match status" value="1"/>
</dbReference>
<dbReference type="Pfam" id="PF00503">
    <property type="entry name" value="G-alpha"/>
    <property type="match status" value="1"/>
</dbReference>
<dbReference type="PRINTS" id="PR00318">
    <property type="entry name" value="GPROTEINA"/>
</dbReference>
<dbReference type="PRINTS" id="PR00441">
    <property type="entry name" value="GPROTEINAI"/>
</dbReference>
<dbReference type="SMART" id="SM00275">
    <property type="entry name" value="G_alpha"/>
    <property type="match status" value="1"/>
</dbReference>
<dbReference type="SUPFAM" id="SSF52540">
    <property type="entry name" value="P-loop containing nucleoside triphosphate hydrolases"/>
    <property type="match status" value="1"/>
</dbReference>
<dbReference type="SUPFAM" id="SSF47895">
    <property type="entry name" value="Transducin (alpha subunit), insertion domain"/>
    <property type="match status" value="1"/>
</dbReference>
<dbReference type="PROSITE" id="PS51882">
    <property type="entry name" value="G_ALPHA"/>
    <property type="match status" value="1"/>
</dbReference>
<keyword id="KW-0131">Cell cycle</keyword>
<keyword id="KW-0132">Cell division</keyword>
<keyword id="KW-1003">Cell membrane</keyword>
<keyword id="KW-0963">Cytoplasm</keyword>
<keyword id="KW-0206">Cytoskeleton</keyword>
<keyword id="KW-0342">GTP-binding</keyword>
<keyword id="KW-0378">Hydrolase</keyword>
<keyword id="KW-0449">Lipoprotein</keyword>
<keyword id="KW-0460">Magnesium</keyword>
<keyword id="KW-0472">Membrane</keyword>
<keyword id="KW-0479">Metal-binding</keyword>
<keyword id="KW-0498">Mitosis</keyword>
<keyword id="KW-0519">Myristate</keyword>
<keyword id="KW-0547">Nucleotide-binding</keyword>
<keyword id="KW-0539">Nucleus</keyword>
<keyword id="KW-0564">Palmitate</keyword>
<keyword id="KW-1185">Reference proteome</keyword>
<keyword id="KW-0807">Transducer</keyword>
<keyword id="KW-0813">Transport</keyword>
<evidence type="ECO:0000250" key="1">
    <source>
        <dbReference type="UniProtKB" id="P10824"/>
    </source>
</evidence>
<evidence type="ECO:0000250" key="2">
    <source>
        <dbReference type="UniProtKB" id="P63096"/>
    </source>
</evidence>
<evidence type="ECO:0000255" key="3">
    <source>
        <dbReference type="PROSITE-ProRule" id="PRU01230"/>
    </source>
</evidence>
<evidence type="ECO:0000305" key="4"/>
<reference key="1">
    <citation type="journal article" date="1997" name="Eur. J. Biochem.">
        <title>Inhibitory guanine-nucleotide-binding-regulatory protein alpha subunits in medaka (Oryzias latipes) oocytes -- cDNA cloning and decreased expression of proteins during oocyte maturation.</title>
        <authorList>
            <person name="Oba Y."/>
            <person name="Yoshikuni M."/>
            <person name="Tanaka M."/>
            <person name="Mita M."/>
            <person name="Nagahama Y."/>
        </authorList>
    </citation>
    <scope>NUCLEOTIDE SEQUENCE [MRNA]</scope>
    <source>
        <tissue>Ovary</tissue>
    </source>
</reference>